<proteinExistence type="inferred from homology"/>
<evidence type="ECO:0000255" key="1">
    <source>
        <dbReference type="HAMAP-Rule" id="MF_03180"/>
    </source>
</evidence>
<keyword id="KW-0010">Activator</keyword>
<keyword id="KW-0012">Acyltransferase</keyword>
<keyword id="KW-0963">Cytoplasm</keyword>
<keyword id="KW-0479">Metal-binding</keyword>
<keyword id="KW-0539">Nucleus</keyword>
<keyword id="KW-1185">Reference proteome</keyword>
<keyword id="KW-0804">Transcription</keyword>
<keyword id="KW-0805">Transcription regulation</keyword>
<keyword id="KW-0808">Transferase</keyword>
<keyword id="KW-0819">tRNA processing</keyword>
<sequence>MIAIGLEGSANKLGVGIMLHPDNGNPPQVLANIRHTYVSPPGEGFLPKDTARHHRAWVVKLVKKALKEAHVSVQDVDCICFTKGPGMGAPLQSVAVAARMLSLLWGKELVGVNHCVGHIEMGRLITGSTNPVVLYVSGGNTQVIAYSSQRYRIFGETLDIAVGNCLDRFARTLHISNDPAPGYNIEQLAKKGKQLVDLPYTVKGMDCSFSGILAAVDGLATTYGLGGEGKDDETDTPIPDADGNGKPTRADLCFSLQETIFSMLVETTERAMAHVGSKEVLIVGGVGCNERLQEMMGIMARDRGGSVHATDERFCIDNGIMIAQAGLLAYSTGFRTPLKDSTCTQRFRTDDVFVKWRD</sequence>
<name>KAE1_ASPOR</name>
<organism>
    <name type="scientific">Aspergillus oryzae (strain ATCC 42149 / RIB 40)</name>
    <name type="common">Yellow koji mold</name>
    <dbReference type="NCBI Taxonomy" id="510516"/>
    <lineage>
        <taxon>Eukaryota</taxon>
        <taxon>Fungi</taxon>
        <taxon>Dikarya</taxon>
        <taxon>Ascomycota</taxon>
        <taxon>Pezizomycotina</taxon>
        <taxon>Eurotiomycetes</taxon>
        <taxon>Eurotiomycetidae</taxon>
        <taxon>Eurotiales</taxon>
        <taxon>Aspergillaceae</taxon>
        <taxon>Aspergillus</taxon>
        <taxon>Aspergillus subgen. Circumdati</taxon>
    </lineage>
</organism>
<reference key="1">
    <citation type="journal article" date="2005" name="Nature">
        <title>Genome sequencing and analysis of Aspergillus oryzae.</title>
        <authorList>
            <person name="Machida M."/>
            <person name="Asai K."/>
            <person name="Sano M."/>
            <person name="Tanaka T."/>
            <person name="Kumagai T."/>
            <person name="Terai G."/>
            <person name="Kusumoto K."/>
            <person name="Arima T."/>
            <person name="Akita O."/>
            <person name="Kashiwagi Y."/>
            <person name="Abe K."/>
            <person name="Gomi K."/>
            <person name="Horiuchi H."/>
            <person name="Kitamoto K."/>
            <person name="Kobayashi T."/>
            <person name="Takeuchi M."/>
            <person name="Denning D.W."/>
            <person name="Galagan J.E."/>
            <person name="Nierman W.C."/>
            <person name="Yu J."/>
            <person name="Archer D.B."/>
            <person name="Bennett J.W."/>
            <person name="Bhatnagar D."/>
            <person name="Cleveland T.E."/>
            <person name="Fedorova N.D."/>
            <person name="Gotoh O."/>
            <person name="Horikawa H."/>
            <person name="Hosoyama A."/>
            <person name="Ichinomiya M."/>
            <person name="Igarashi R."/>
            <person name="Iwashita K."/>
            <person name="Juvvadi P.R."/>
            <person name="Kato M."/>
            <person name="Kato Y."/>
            <person name="Kin T."/>
            <person name="Kokubun A."/>
            <person name="Maeda H."/>
            <person name="Maeyama N."/>
            <person name="Maruyama J."/>
            <person name="Nagasaki H."/>
            <person name="Nakajima T."/>
            <person name="Oda K."/>
            <person name="Okada K."/>
            <person name="Paulsen I."/>
            <person name="Sakamoto K."/>
            <person name="Sawano T."/>
            <person name="Takahashi M."/>
            <person name="Takase K."/>
            <person name="Terabayashi Y."/>
            <person name="Wortman J.R."/>
            <person name="Yamada O."/>
            <person name="Yamagata Y."/>
            <person name="Anazawa H."/>
            <person name="Hata Y."/>
            <person name="Koide Y."/>
            <person name="Komori T."/>
            <person name="Koyama Y."/>
            <person name="Minetoki T."/>
            <person name="Suharnan S."/>
            <person name="Tanaka A."/>
            <person name="Isono K."/>
            <person name="Kuhara S."/>
            <person name="Ogasawara N."/>
            <person name="Kikuchi H."/>
        </authorList>
    </citation>
    <scope>NUCLEOTIDE SEQUENCE [LARGE SCALE GENOMIC DNA]</scope>
    <source>
        <strain>ATCC 42149 / RIB 40</strain>
    </source>
</reference>
<protein>
    <recommendedName>
        <fullName evidence="1">tRNA N6-adenosine threonylcarbamoyltransferase</fullName>
        <ecNumber evidence="1">2.3.1.234</ecNumber>
    </recommendedName>
    <alternativeName>
        <fullName>N6-L-threonylcarbamoyladenine synthase</fullName>
        <shortName>t(6)A synthase</shortName>
    </alternativeName>
    <alternativeName>
        <fullName evidence="1">t(6)A37 threonylcarbamoyladenosine biosynthesis protein kae1</fullName>
    </alternativeName>
    <alternativeName>
        <fullName evidence="1">tRNA threonylcarbamoyladenosine biosynthesis protein kae1</fullName>
    </alternativeName>
</protein>
<dbReference type="EC" id="2.3.1.234" evidence="1"/>
<dbReference type="EMBL" id="BA000053">
    <property type="protein sequence ID" value="BAE61850.1"/>
    <property type="molecule type" value="Genomic_DNA"/>
</dbReference>
<dbReference type="RefSeq" id="XP_001822983.1">
    <property type="nucleotide sequence ID" value="XM_001822931.2"/>
</dbReference>
<dbReference type="SMR" id="Q2U9B5"/>
<dbReference type="STRING" id="510516.Q2U9B5"/>
<dbReference type="EnsemblFungi" id="BAE61850">
    <property type="protein sequence ID" value="BAE61850"/>
    <property type="gene ID" value="AO090701000097"/>
</dbReference>
<dbReference type="GeneID" id="5995040"/>
<dbReference type="KEGG" id="aor:AO090701000097"/>
<dbReference type="VEuPathDB" id="FungiDB:AO090701000097"/>
<dbReference type="HOGENOM" id="CLU_023208_2_2_1"/>
<dbReference type="OMA" id="HHRSWVV"/>
<dbReference type="OrthoDB" id="14980at5052"/>
<dbReference type="Proteomes" id="UP000006564">
    <property type="component" value="Chromosome 5"/>
</dbReference>
<dbReference type="GO" id="GO:0000785">
    <property type="term" value="C:chromatin"/>
    <property type="evidence" value="ECO:0007669"/>
    <property type="project" value="EnsemblFungi"/>
</dbReference>
<dbReference type="GO" id="GO:0005737">
    <property type="term" value="C:cytoplasm"/>
    <property type="evidence" value="ECO:0007669"/>
    <property type="project" value="UniProtKB-SubCell"/>
</dbReference>
<dbReference type="GO" id="GO:0000408">
    <property type="term" value="C:EKC/KEOPS complex"/>
    <property type="evidence" value="ECO:0007669"/>
    <property type="project" value="EnsemblFungi"/>
</dbReference>
<dbReference type="GO" id="GO:0005634">
    <property type="term" value="C:nucleus"/>
    <property type="evidence" value="ECO:0007669"/>
    <property type="project" value="UniProtKB-SubCell"/>
</dbReference>
<dbReference type="GO" id="GO:0031490">
    <property type="term" value="F:chromatin DNA binding"/>
    <property type="evidence" value="ECO:0007669"/>
    <property type="project" value="EnsemblFungi"/>
</dbReference>
<dbReference type="GO" id="GO:0046872">
    <property type="term" value="F:metal ion binding"/>
    <property type="evidence" value="ECO:0007669"/>
    <property type="project" value="UniProtKB-KW"/>
</dbReference>
<dbReference type="GO" id="GO:0061711">
    <property type="term" value="F:N(6)-L-threonylcarbamoyladenine synthase activity"/>
    <property type="evidence" value="ECO:0007669"/>
    <property type="project" value="UniProtKB-EC"/>
</dbReference>
<dbReference type="GO" id="GO:0008252">
    <property type="term" value="F:nucleotidase activity"/>
    <property type="evidence" value="ECO:0007669"/>
    <property type="project" value="EnsemblFungi"/>
</dbReference>
<dbReference type="GO" id="GO:0045944">
    <property type="term" value="P:positive regulation of transcription by RNA polymerase II"/>
    <property type="evidence" value="ECO:0007669"/>
    <property type="project" value="EnsemblFungi"/>
</dbReference>
<dbReference type="GO" id="GO:0000722">
    <property type="term" value="P:telomere maintenance via recombination"/>
    <property type="evidence" value="ECO:0007669"/>
    <property type="project" value="EnsemblFungi"/>
</dbReference>
<dbReference type="GO" id="GO:0002949">
    <property type="term" value="P:tRNA threonylcarbamoyladenosine modification"/>
    <property type="evidence" value="ECO:0007669"/>
    <property type="project" value="UniProtKB-UniRule"/>
</dbReference>
<dbReference type="CDD" id="cd24132">
    <property type="entry name" value="ASKHA_NBD_OSGEP_like_euk"/>
    <property type="match status" value="1"/>
</dbReference>
<dbReference type="FunFam" id="3.30.420.40:FF:000038">
    <property type="entry name" value="Probable tRNA N6-adenosine threonylcarbamoyltransferase"/>
    <property type="match status" value="1"/>
</dbReference>
<dbReference type="FunFam" id="3.30.420.40:FF:000295">
    <property type="entry name" value="Probable tRNA N6-adenosine threonylcarbamoyltransferase"/>
    <property type="match status" value="1"/>
</dbReference>
<dbReference type="Gene3D" id="3.30.420.40">
    <property type="match status" value="2"/>
</dbReference>
<dbReference type="HAMAP" id="MF_01446">
    <property type="entry name" value="Kae1"/>
    <property type="match status" value="1"/>
</dbReference>
<dbReference type="InterPro" id="IPR043129">
    <property type="entry name" value="ATPase_NBD"/>
</dbReference>
<dbReference type="InterPro" id="IPR000905">
    <property type="entry name" value="Gcp-like_dom"/>
</dbReference>
<dbReference type="InterPro" id="IPR017861">
    <property type="entry name" value="KAE1/TsaD"/>
</dbReference>
<dbReference type="InterPro" id="IPR034680">
    <property type="entry name" value="Kae1_archaea_euk"/>
</dbReference>
<dbReference type="NCBIfam" id="TIGR00329">
    <property type="entry name" value="gcp_kae1"/>
    <property type="match status" value="1"/>
</dbReference>
<dbReference type="PANTHER" id="PTHR11735">
    <property type="entry name" value="TRNA N6-ADENOSINE THREONYLCARBAMOYLTRANSFERASE"/>
    <property type="match status" value="1"/>
</dbReference>
<dbReference type="PANTHER" id="PTHR11735:SF14">
    <property type="entry name" value="TRNA N6-ADENOSINE THREONYLCARBAMOYLTRANSFERASE"/>
    <property type="match status" value="1"/>
</dbReference>
<dbReference type="Pfam" id="PF00814">
    <property type="entry name" value="TsaD"/>
    <property type="match status" value="1"/>
</dbReference>
<dbReference type="PRINTS" id="PR00789">
    <property type="entry name" value="OSIALOPTASE"/>
</dbReference>
<dbReference type="SUPFAM" id="SSF53067">
    <property type="entry name" value="Actin-like ATPase domain"/>
    <property type="match status" value="1"/>
</dbReference>
<comment type="function">
    <text evidence="1">Component of the EKC/KEOPS complex that is required for the formation of a threonylcarbamoyl group on adenosine at position 37 (t(6)A37) in tRNAs that read codons beginning with adenine. The complex is probably involved in the transfer of the threonylcarbamoyl moiety of threonylcarbamoyl-AMP (TC-AMP) to the N6 group of A37. Kae1 likely plays a direct catalytic role in this reaction, but requires other protein(s) of the complex to fulfill this activity. The EKC/KEOPS complex also promotes both telomere uncapping and telomere elongation. The complex is required for efficient recruitment of transcriptional coactivators.</text>
</comment>
<comment type="catalytic activity">
    <reaction evidence="1">
        <text>L-threonylcarbamoyladenylate + adenosine(37) in tRNA = N(6)-L-threonylcarbamoyladenosine(37) in tRNA + AMP + H(+)</text>
        <dbReference type="Rhea" id="RHEA:37059"/>
        <dbReference type="Rhea" id="RHEA-COMP:10162"/>
        <dbReference type="Rhea" id="RHEA-COMP:10163"/>
        <dbReference type="ChEBI" id="CHEBI:15378"/>
        <dbReference type="ChEBI" id="CHEBI:73682"/>
        <dbReference type="ChEBI" id="CHEBI:74411"/>
        <dbReference type="ChEBI" id="CHEBI:74418"/>
        <dbReference type="ChEBI" id="CHEBI:456215"/>
        <dbReference type="EC" id="2.3.1.234"/>
    </reaction>
</comment>
<comment type="cofactor">
    <cofactor evidence="1">
        <name>a divalent metal cation</name>
        <dbReference type="ChEBI" id="CHEBI:60240"/>
    </cofactor>
    <text evidence="1">Binds 1 divalent metal cation per subunit.</text>
</comment>
<comment type="subunit">
    <text evidence="1">Component of the EKC/KEOPS complex composed of at least bud32, cgi121, gon7, kae1 and pcc1; the whole complex dimerizes.</text>
</comment>
<comment type="subcellular location">
    <subcellularLocation>
        <location evidence="1">Cytoplasm</location>
    </subcellularLocation>
    <subcellularLocation>
        <location evidence="1">Nucleus</location>
    </subcellularLocation>
</comment>
<comment type="similarity">
    <text evidence="1">Belongs to the KAE1 / TsaD family.</text>
</comment>
<feature type="chain" id="PRO_0000278927" description="tRNA N6-adenosine threonylcarbamoyltransferase">
    <location>
        <begin position="1"/>
        <end position="358"/>
    </location>
</feature>
<feature type="binding site" evidence="1">
    <location>
        <position position="114"/>
    </location>
    <ligand>
        <name>a divalent metal cation</name>
        <dbReference type="ChEBI" id="CHEBI:60240"/>
    </ligand>
</feature>
<feature type="binding site" evidence="1">
    <location>
        <position position="118"/>
    </location>
    <ligand>
        <name>a divalent metal cation</name>
        <dbReference type="ChEBI" id="CHEBI:60240"/>
    </ligand>
</feature>
<feature type="binding site" evidence="1">
    <location>
        <begin position="135"/>
        <end position="139"/>
    </location>
    <ligand>
        <name>substrate</name>
    </ligand>
</feature>
<feature type="binding site" evidence="1">
    <location>
        <position position="135"/>
    </location>
    <ligand>
        <name>a divalent metal cation</name>
        <dbReference type="ChEBI" id="CHEBI:60240"/>
    </ligand>
</feature>
<feature type="binding site" evidence="1">
    <location>
        <position position="167"/>
    </location>
    <ligand>
        <name>substrate</name>
    </ligand>
</feature>
<feature type="binding site" evidence="1">
    <location>
        <position position="182"/>
    </location>
    <ligand>
        <name>substrate</name>
    </ligand>
</feature>
<feature type="binding site" evidence="1">
    <location>
        <position position="186"/>
    </location>
    <ligand>
        <name>substrate</name>
    </ligand>
</feature>
<feature type="binding site" evidence="1">
    <location>
        <position position="289"/>
    </location>
    <ligand>
        <name>substrate</name>
    </ligand>
</feature>
<feature type="binding site" evidence="1">
    <location>
        <position position="317"/>
    </location>
    <ligand>
        <name>a divalent metal cation</name>
        <dbReference type="ChEBI" id="CHEBI:60240"/>
    </ligand>
</feature>
<accession>Q2U9B5</accession>
<gene>
    <name type="primary">kae1</name>
    <name type="ORF">AO090701000097</name>
</gene>